<name>IPYR_XANCP</name>
<evidence type="ECO:0000255" key="1">
    <source>
        <dbReference type="HAMAP-Rule" id="MF_00209"/>
    </source>
</evidence>
<proteinExistence type="inferred from homology"/>
<keyword id="KW-0963">Cytoplasm</keyword>
<keyword id="KW-0378">Hydrolase</keyword>
<keyword id="KW-0460">Magnesium</keyword>
<keyword id="KW-0479">Metal-binding</keyword>
<keyword id="KW-1185">Reference proteome</keyword>
<protein>
    <recommendedName>
        <fullName evidence="1">Inorganic pyrophosphatase</fullName>
        <ecNumber evidence="1">3.6.1.1</ecNumber>
    </recommendedName>
    <alternativeName>
        <fullName evidence="1">Pyrophosphate phospho-hydrolase</fullName>
        <shortName evidence="1">PPase</shortName>
    </alternativeName>
</protein>
<comment type="function">
    <text evidence="1">Catalyzes the hydrolysis of inorganic pyrophosphate (PPi) forming two phosphate ions.</text>
</comment>
<comment type="catalytic activity">
    <reaction evidence="1">
        <text>diphosphate + H2O = 2 phosphate + H(+)</text>
        <dbReference type="Rhea" id="RHEA:24576"/>
        <dbReference type="ChEBI" id="CHEBI:15377"/>
        <dbReference type="ChEBI" id="CHEBI:15378"/>
        <dbReference type="ChEBI" id="CHEBI:33019"/>
        <dbReference type="ChEBI" id="CHEBI:43474"/>
        <dbReference type="EC" id="3.6.1.1"/>
    </reaction>
</comment>
<comment type="cofactor">
    <cofactor evidence="1">
        <name>Mg(2+)</name>
        <dbReference type="ChEBI" id="CHEBI:18420"/>
    </cofactor>
</comment>
<comment type="subunit">
    <text evidence="1">Homohexamer.</text>
</comment>
<comment type="subcellular location">
    <subcellularLocation>
        <location evidence="1">Cytoplasm</location>
    </subcellularLocation>
</comment>
<comment type="similarity">
    <text evidence="1">Belongs to the PPase family.</text>
</comment>
<reference key="1">
    <citation type="journal article" date="2002" name="Nature">
        <title>Comparison of the genomes of two Xanthomonas pathogens with differing host specificities.</title>
        <authorList>
            <person name="da Silva A.C.R."/>
            <person name="Ferro J.A."/>
            <person name="Reinach F.C."/>
            <person name="Farah C.S."/>
            <person name="Furlan L.R."/>
            <person name="Quaggio R.B."/>
            <person name="Monteiro-Vitorello C.B."/>
            <person name="Van Sluys M.A."/>
            <person name="Almeida N.F. Jr."/>
            <person name="Alves L.M.C."/>
            <person name="do Amaral A.M."/>
            <person name="Bertolini M.C."/>
            <person name="Camargo L.E.A."/>
            <person name="Camarotte G."/>
            <person name="Cannavan F."/>
            <person name="Cardozo J."/>
            <person name="Chambergo F."/>
            <person name="Ciapina L.P."/>
            <person name="Cicarelli R.M.B."/>
            <person name="Coutinho L.L."/>
            <person name="Cursino-Santos J.R."/>
            <person name="El-Dorry H."/>
            <person name="Faria J.B."/>
            <person name="Ferreira A.J.S."/>
            <person name="Ferreira R.C.C."/>
            <person name="Ferro M.I.T."/>
            <person name="Formighieri E.F."/>
            <person name="Franco M.C."/>
            <person name="Greggio C.C."/>
            <person name="Gruber A."/>
            <person name="Katsuyama A.M."/>
            <person name="Kishi L.T."/>
            <person name="Leite R.P."/>
            <person name="Lemos E.G.M."/>
            <person name="Lemos M.V.F."/>
            <person name="Locali E.C."/>
            <person name="Machado M.A."/>
            <person name="Madeira A.M.B.N."/>
            <person name="Martinez-Rossi N.M."/>
            <person name="Martins E.C."/>
            <person name="Meidanis J."/>
            <person name="Menck C.F.M."/>
            <person name="Miyaki C.Y."/>
            <person name="Moon D.H."/>
            <person name="Moreira L.M."/>
            <person name="Novo M.T.M."/>
            <person name="Okura V.K."/>
            <person name="Oliveira M.C."/>
            <person name="Oliveira V.R."/>
            <person name="Pereira H.A."/>
            <person name="Rossi A."/>
            <person name="Sena J.A.D."/>
            <person name="Silva C."/>
            <person name="de Souza R.F."/>
            <person name="Spinola L.A.F."/>
            <person name="Takita M.A."/>
            <person name="Tamura R.E."/>
            <person name="Teixeira E.C."/>
            <person name="Tezza R.I.D."/>
            <person name="Trindade dos Santos M."/>
            <person name="Truffi D."/>
            <person name="Tsai S.M."/>
            <person name="White F.F."/>
            <person name="Setubal J.C."/>
            <person name="Kitajima J.P."/>
        </authorList>
    </citation>
    <scope>NUCLEOTIDE SEQUENCE [LARGE SCALE GENOMIC DNA]</scope>
    <source>
        <strain>ATCC 33913 / DSM 3586 / NCPPB 528 / LMG 568 / P 25</strain>
    </source>
</reference>
<gene>
    <name evidence="1" type="primary">ppa</name>
    <name type="ordered locus">XCC3314</name>
</gene>
<dbReference type="EC" id="3.6.1.1" evidence="1"/>
<dbReference type="EMBL" id="AE008922">
    <property type="protein sequence ID" value="AAM42584.1"/>
    <property type="molecule type" value="Genomic_DNA"/>
</dbReference>
<dbReference type="RefSeq" id="NP_638660.1">
    <property type="nucleotide sequence ID" value="NC_003902.1"/>
</dbReference>
<dbReference type="RefSeq" id="WP_002804918.1">
    <property type="nucleotide sequence ID" value="NC_003902.1"/>
</dbReference>
<dbReference type="SMR" id="Q8P5M4"/>
<dbReference type="STRING" id="190485.XCC3314"/>
<dbReference type="EnsemblBacteria" id="AAM42584">
    <property type="protein sequence ID" value="AAM42584"/>
    <property type="gene ID" value="XCC3314"/>
</dbReference>
<dbReference type="GeneID" id="79390581"/>
<dbReference type="KEGG" id="xcc:XCC3314"/>
<dbReference type="PATRIC" id="fig|190485.4.peg.3543"/>
<dbReference type="eggNOG" id="COG0221">
    <property type="taxonomic scope" value="Bacteria"/>
</dbReference>
<dbReference type="HOGENOM" id="CLU_073198_1_0_6"/>
<dbReference type="OrthoDB" id="5187599at2"/>
<dbReference type="Proteomes" id="UP000001010">
    <property type="component" value="Chromosome"/>
</dbReference>
<dbReference type="GO" id="GO:0005829">
    <property type="term" value="C:cytosol"/>
    <property type="evidence" value="ECO:0000318"/>
    <property type="project" value="GO_Central"/>
</dbReference>
<dbReference type="GO" id="GO:0004427">
    <property type="term" value="F:inorganic diphosphate phosphatase activity"/>
    <property type="evidence" value="ECO:0000318"/>
    <property type="project" value="GO_Central"/>
</dbReference>
<dbReference type="GO" id="GO:0000287">
    <property type="term" value="F:magnesium ion binding"/>
    <property type="evidence" value="ECO:0000318"/>
    <property type="project" value="GO_Central"/>
</dbReference>
<dbReference type="GO" id="GO:0006796">
    <property type="term" value="P:phosphate-containing compound metabolic process"/>
    <property type="evidence" value="ECO:0000318"/>
    <property type="project" value="GO_Central"/>
</dbReference>
<dbReference type="CDD" id="cd00412">
    <property type="entry name" value="pyrophosphatase"/>
    <property type="match status" value="1"/>
</dbReference>
<dbReference type="FunFam" id="3.90.80.10:FF:000001">
    <property type="entry name" value="Inorganic pyrophosphatase"/>
    <property type="match status" value="1"/>
</dbReference>
<dbReference type="Gene3D" id="3.90.80.10">
    <property type="entry name" value="Inorganic pyrophosphatase"/>
    <property type="match status" value="1"/>
</dbReference>
<dbReference type="HAMAP" id="MF_00209">
    <property type="entry name" value="Inorganic_PPase"/>
    <property type="match status" value="1"/>
</dbReference>
<dbReference type="InterPro" id="IPR008162">
    <property type="entry name" value="Pyrophosphatase"/>
</dbReference>
<dbReference type="InterPro" id="IPR036649">
    <property type="entry name" value="Pyrophosphatase_sf"/>
</dbReference>
<dbReference type="NCBIfam" id="NF002317">
    <property type="entry name" value="PRK01250.1"/>
    <property type="match status" value="1"/>
</dbReference>
<dbReference type="PANTHER" id="PTHR10286">
    <property type="entry name" value="INORGANIC PYROPHOSPHATASE"/>
    <property type="match status" value="1"/>
</dbReference>
<dbReference type="Pfam" id="PF00719">
    <property type="entry name" value="Pyrophosphatase"/>
    <property type="match status" value="1"/>
</dbReference>
<dbReference type="SUPFAM" id="SSF50324">
    <property type="entry name" value="Inorganic pyrophosphatase"/>
    <property type="match status" value="1"/>
</dbReference>
<feature type="chain" id="PRO_0000137542" description="Inorganic pyrophosphatase">
    <location>
        <begin position="1"/>
        <end position="178"/>
    </location>
</feature>
<feature type="binding site" evidence="1">
    <location>
        <position position="30"/>
    </location>
    <ligand>
        <name>substrate</name>
    </ligand>
</feature>
<feature type="binding site" evidence="1">
    <location>
        <position position="44"/>
    </location>
    <ligand>
        <name>substrate</name>
    </ligand>
</feature>
<feature type="binding site" evidence="1">
    <location>
        <position position="56"/>
    </location>
    <ligand>
        <name>substrate</name>
    </ligand>
</feature>
<feature type="binding site" evidence="1">
    <location>
        <position position="66"/>
    </location>
    <ligand>
        <name>Mg(2+)</name>
        <dbReference type="ChEBI" id="CHEBI:18420"/>
        <label>1</label>
    </ligand>
</feature>
<feature type="binding site" evidence="1">
    <location>
        <position position="71"/>
    </location>
    <ligand>
        <name>Mg(2+)</name>
        <dbReference type="ChEBI" id="CHEBI:18420"/>
        <label>1</label>
    </ligand>
</feature>
<feature type="binding site" evidence="1">
    <location>
        <position position="71"/>
    </location>
    <ligand>
        <name>Mg(2+)</name>
        <dbReference type="ChEBI" id="CHEBI:18420"/>
        <label>2</label>
    </ligand>
</feature>
<feature type="binding site" evidence="1">
    <location>
        <position position="103"/>
    </location>
    <ligand>
        <name>Mg(2+)</name>
        <dbReference type="ChEBI" id="CHEBI:18420"/>
        <label>1</label>
    </ligand>
</feature>
<feature type="binding site" evidence="1">
    <location>
        <position position="142"/>
    </location>
    <ligand>
        <name>substrate</name>
    </ligand>
</feature>
<organism>
    <name type="scientific">Xanthomonas campestris pv. campestris (strain ATCC 33913 / DSM 3586 / NCPPB 528 / LMG 568 / P 25)</name>
    <dbReference type="NCBI Taxonomy" id="190485"/>
    <lineage>
        <taxon>Bacteria</taxon>
        <taxon>Pseudomonadati</taxon>
        <taxon>Pseudomonadota</taxon>
        <taxon>Gammaproteobacteria</taxon>
        <taxon>Lysobacterales</taxon>
        <taxon>Lysobacteraceae</taxon>
        <taxon>Xanthomonas</taxon>
    </lineage>
</organism>
<accession>Q8P5M4</accession>
<sequence>MGLELVTSGKNLPEEINVVIEIPKDSEPVKYEVDKASGAIFVDRILSTPMRYPCNYGYVPNTLCGDGDPADVLVVLPLPLVPGSVVRCRPVGVLRMSDEAGSDEKILAVPIEKIFSGYAHIEDIDQVSSHWMERIGHFFEHYKDLEKGKWVKLDGWGGAAEAKRILVESVERYNSDAP</sequence>